<keyword id="KW-0028">Amino-acid biosynthesis</keyword>
<keyword id="KW-0963">Cytoplasm</keyword>
<keyword id="KW-0220">Diaminopimelate biosynthesis</keyword>
<keyword id="KW-0457">Lysine biosynthesis</keyword>
<keyword id="KW-0520">NAD</keyword>
<keyword id="KW-0521">NADP</keyword>
<keyword id="KW-0560">Oxidoreductase</keyword>
<dbReference type="EC" id="1.17.1.8" evidence="1"/>
<dbReference type="EMBL" id="BA000018">
    <property type="protein sequence ID" value="BAB42488.1"/>
    <property type="molecule type" value="Genomic_DNA"/>
</dbReference>
<dbReference type="PIR" id="D89916">
    <property type="entry name" value="D89916"/>
</dbReference>
<dbReference type="RefSeq" id="WP_000698231.1">
    <property type="nucleotide sequence ID" value="NC_002745.2"/>
</dbReference>
<dbReference type="SMR" id="P63894"/>
<dbReference type="EnsemblBacteria" id="BAB42488">
    <property type="protein sequence ID" value="BAB42488"/>
    <property type="gene ID" value="BAB42488"/>
</dbReference>
<dbReference type="KEGG" id="sau:SA1228"/>
<dbReference type="HOGENOM" id="CLU_047479_2_2_9"/>
<dbReference type="UniPathway" id="UPA00034">
    <property type="reaction ID" value="UER00018"/>
</dbReference>
<dbReference type="GO" id="GO:0005829">
    <property type="term" value="C:cytosol"/>
    <property type="evidence" value="ECO:0007669"/>
    <property type="project" value="TreeGrafter"/>
</dbReference>
<dbReference type="GO" id="GO:0008839">
    <property type="term" value="F:4-hydroxy-tetrahydrodipicolinate reductase"/>
    <property type="evidence" value="ECO:0007669"/>
    <property type="project" value="UniProtKB-EC"/>
</dbReference>
<dbReference type="GO" id="GO:0051287">
    <property type="term" value="F:NAD binding"/>
    <property type="evidence" value="ECO:0007669"/>
    <property type="project" value="UniProtKB-UniRule"/>
</dbReference>
<dbReference type="GO" id="GO:0050661">
    <property type="term" value="F:NADP binding"/>
    <property type="evidence" value="ECO:0007669"/>
    <property type="project" value="UniProtKB-UniRule"/>
</dbReference>
<dbReference type="GO" id="GO:0016726">
    <property type="term" value="F:oxidoreductase activity, acting on CH or CH2 groups, NAD or NADP as acceptor"/>
    <property type="evidence" value="ECO:0007669"/>
    <property type="project" value="UniProtKB-UniRule"/>
</dbReference>
<dbReference type="GO" id="GO:0019877">
    <property type="term" value="P:diaminopimelate biosynthetic process"/>
    <property type="evidence" value="ECO:0007669"/>
    <property type="project" value="UniProtKB-UniRule"/>
</dbReference>
<dbReference type="GO" id="GO:0009089">
    <property type="term" value="P:lysine biosynthetic process via diaminopimelate"/>
    <property type="evidence" value="ECO:0007669"/>
    <property type="project" value="UniProtKB-UniRule"/>
</dbReference>
<dbReference type="CDD" id="cd02274">
    <property type="entry name" value="DHDPR_N"/>
    <property type="match status" value="1"/>
</dbReference>
<dbReference type="FunFam" id="3.30.360.10:FF:000009">
    <property type="entry name" value="4-hydroxy-tetrahydrodipicolinate reductase"/>
    <property type="match status" value="1"/>
</dbReference>
<dbReference type="Gene3D" id="3.30.360.10">
    <property type="entry name" value="Dihydrodipicolinate Reductase, domain 2"/>
    <property type="match status" value="1"/>
</dbReference>
<dbReference type="Gene3D" id="3.40.50.720">
    <property type="entry name" value="NAD(P)-binding Rossmann-like Domain"/>
    <property type="match status" value="1"/>
</dbReference>
<dbReference type="HAMAP" id="MF_00102">
    <property type="entry name" value="DapB"/>
    <property type="match status" value="1"/>
</dbReference>
<dbReference type="InterPro" id="IPR022663">
    <property type="entry name" value="DapB_C"/>
</dbReference>
<dbReference type="InterPro" id="IPR000846">
    <property type="entry name" value="DapB_N"/>
</dbReference>
<dbReference type="InterPro" id="IPR022664">
    <property type="entry name" value="DapB_N_CS"/>
</dbReference>
<dbReference type="InterPro" id="IPR023940">
    <property type="entry name" value="DHDPR_bac"/>
</dbReference>
<dbReference type="InterPro" id="IPR036291">
    <property type="entry name" value="NAD(P)-bd_dom_sf"/>
</dbReference>
<dbReference type="NCBIfam" id="TIGR00036">
    <property type="entry name" value="dapB"/>
    <property type="match status" value="1"/>
</dbReference>
<dbReference type="PANTHER" id="PTHR20836:SF7">
    <property type="entry name" value="4-HYDROXY-TETRAHYDRODIPICOLINATE REDUCTASE"/>
    <property type="match status" value="1"/>
</dbReference>
<dbReference type="PANTHER" id="PTHR20836">
    <property type="entry name" value="DIHYDRODIPICOLINATE REDUCTASE"/>
    <property type="match status" value="1"/>
</dbReference>
<dbReference type="Pfam" id="PF05173">
    <property type="entry name" value="DapB_C"/>
    <property type="match status" value="1"/>
</dbReference>
<dbReference type="Pfam" id="PF01113">
    <property type="entry name" value="DapB_N"/>
    <property type="match status" value="1"/>
</dbReference>
<dbReference type="PIRSF" id="PIRSF000161">
    <property type="entry name" value="DHPR"/>
    <property type="match status" value="1"/>
</dbReference>
<dbReference type="SUPFAM" id="SSF55347">
    <property type="entry name" value="Glyceraldehyde-3-phosphate dehydrogenase-like, C-terminal domain"/>
    <property type="match status" value="1"/>
</dbReference>
<dbReference type="SUPFAM" id="SSF51735">
    <property type="entry name" value="NAD(P)-binding Rossmann-fold domains"/>
    <property type="match status" value="1"/>
</dbReference>
<dbReference type="PROSITE" id="PS01298">
    <property type="entry name" value="DAPB"/>
    <property type="match status" value="1"/>
</dbReference>
<feature type="chain" id="PRO_0000141487" description="4-hydroxy-tetrahydrodipicolinate reductase">
    <location>
        <begin position="1"/>
        <end position="240"/>
    </location>
</feature>
<feature type="active site" description="Proton donor/acceptor" evidence="1">
    <location>
        <position position="135"/>
    </location>
</feature>
<feature type="active site" description="Proton donor" evidence="1">
    <location>
        <position position="139"/>
    </location>
</feature>
<feature type="binding site" evidence="1">
    <location>
        <begin position="79"/>
        <end position="81"/>
    </location>
    <ligand>
        <name>NAD(+)</name>
        <dbReference type="ChEBI" id="CHEBI:57540"/>
    </ligand>
</feature>
<feature type="binding site" evidence="1">
    <location>
        <begin position="103"/>
        <end position="106"/>
    </location>
    <ligand>
        <name>NAD(+)</name>
        <dbReference type="ChEBI" id="CHEBI:57540"/>
    </ligand>
</feature>
<feature type="binding site" evidence="1">
    <location>
        <position position="136"/>
    </location>
    <ligand>
        <name>(S)-2,3,4,5-tetrahydrodipicolinate</name>
        <dbReference type="ChEBI" id="CHEBI:16845"/>
    </ligand>
</feature>
<feature type="binding site" evidence="1">
    <location>
        <begin position="145"/>
        <end position="146"/>
    </location>
    <ligand>
        <name>(S)-2,3,4,5-tetrahydrodipicolinate</name>
        <dbReference type="ChEBI" id="CHEBI:16845"/>
    </ligand>
</feature>
<reference key="1">
    <citation type="journal article" date="2001" name="Lancet">
        <title>Whole genome sequencing of meticillin-resistant Staphylococcus aureus.</title>
        <authorList>
            <person name="Kuroda M."/>
            <person name="Ohta T."/>
            <person name="Uchiyama I."/>
            <person name="Baba T."/>
            <person name="Yuzawa H."/>
            <person name="Kobayashi I."/>
            <person name="Cui L."/>
            <person name="Oguchi A."/>
            <person name="Aoki K."/>
            <person name="Nagai Y."/>
            <person name="Lian J.-Q."/>
            <person name="Ito T."/>
            <person name="Kanamori M."/>
            <person name="Matsumaru H."/>
            <person name="Maruyama A."/>
            <person name="Murakami H."/>
            <person name="Hosoyama A."/>
            <person name="Mizutani-Ui Y."/>
            <person name="Takahashi N.K."/>
            <person name="Sawano T."/>
            <person name="Inoue R."/>
            <person name="Kaito C."/>
            <person name="Sekimizu K."/>
            <person name="Hirakawa H."/>
            <person name="Kuhara S."/>
            <person name="Goto S."/>
            <person name="Yabuzaki J."/>
            <person name="Kanehisa M."/>
            <person name="Yamashita A."/>
            <person name="Oshima K."/>
            <person name="Furuya K."/>
            <person name="Yoshino C."/>
            <person name="Shiba T."/>
            <person name="Hattori M."/>
            <person name="Ogasawara N."/>
            <person name="Hayashi H."/>
            <person name="Hiramatsu K."/>
        </authorList>
    </citation>
    <scope>NUCLEOTIDE SEQUENCE [LARGE SCALE GENOMIC DNA]</scope>
    <source>
        <strain>N315</strain>
    </source>
</reference>
<gene>
    <name evidence="1" type="primary">dapB</name>
    <name type="ordered locus">SA1228</name>
</gene>
<comment type="function">
    <text evidence="1">Catalyzes the conversion of 4-hydroxy-tetrahydrodipicolinate (HTPA) to tetrahydrodipicolinate.</text>
</comment>
<comment type="catalytic activity">
    <reaction evidence="1">
        <text>(S)-2,3,4,5-tetrahydrodipicolinate + NAD(+) + H2O = (2S,4S)-4-hydroxy-2,3,4,5-tetrahydrodipicolinate + NADH + H(+)</text>
        <dbReference type="Rhea" id="RHEA:35323"/>
        <dbReference type="ChEBI" id="CHEBI:15377"/>
        <dbReference type="ChEBI" id="CHEBI:15378"/>
        <dbReference type="ChEBI" id="CHEBI:16845"/>
        <dbReference type="ChEBI" id="CHEBI:57540"/>
        <dbReference type="ChEBI" id="CHEBI:57945"/>
        <dbReference type="ChEBI" id="CHEBI:67139"/>
        <dbReference type="EC" id="1.17.1.8"/>
    </reaction>
</comment>
<comment type="catalytic activity">
    <reaction evidence="1">
        <text>(S)-2,3,4,5-tetrahydrodipicolinate + NADP(+) + H2O = (2S,4S)-4-hydroxy-2,3,4,5-tetrahydrodipicolinate + NADPH + H(+)</text>
        <dbReference type="Rhea" id="RHEA:35331"/>
        <dbReference type="ChEBI" id="CHEBI:15377"/>
        <dbReference type="ChEBI" id="CHEBI:15378"/>
        <dbReference type="ChEBI" id="CHEBI:16845"/>
        <dbReference type="ChEBI" id="CHEBI:57783"/>
        <dbReference type="ChEBI" id="CHEBI:58349"/>
        <dbReference type="ChEBI" id="CHEBI:67139"/>
        <dbReference type="EC" id="1.17.1.8"/>
    </reaction>
</comment>
<comment type="pathway">
    <text evidence="1">Amino-acid biosynthesis; L-lysine biosynthesis via DAP pathway; (S)-tetrahydrodipicolinate from L-aspartate: step 4/4.</text>
</comment>
<comment type="subcellular location">
    <subcellularLocation>
        <location evidence="1">Cytoplasm</location>
    </subcellularLocation>
</comment>
<comment type="similarity">
    <text evidence="1">Belongs to the DapB family.</text>
</comment>
<comment type="caution">
    <text evidence="2">Was originally thought to be a dihydrodipicolinate reductase (DHDPR), catalyzing the conversion of dihydrodipicolinate to tetrahydrodipicolinate. However, it was shown in E.coli that the substrate of the enzymatic reaction is not dihydrodipicolinate (DHDP) but in fact (2S,4S)-4-hydroxy-2,3,4,5-tetrahydrodipicolinic acid (HTPA), the product released by the DapA-catalyzed reaction.</text>
</comment>
<protein>
    <recommendedName>
        <fullName evidence="1">4-hydroxy-tetrahydrodipicolinate reductase</fullName>
        <shortName evidence="1">HTPA reductase</shortName>
        <ecNumber evidence="1">1.17.1.8</ecNumber>
    </recommendedName>
</protein>
<name>DAPB_STAAN</name>
<organism>
    <name type="scientific">Staphylococcus aureus (strain N315)</name>
    <dbReference type="NCBI Taxonomy" id="158879"/>
    <lineage>
        <taxon>Bacteria</taxon>
        <taxon>Bacillati</taxon>
        <taxon>Bacillota</taxon>
        <taxon>Bacilli</taxon>
        <taxon>Bacillales</taxon>
        <taxon>Staphylococcaceae</taxon>
        <taxon>Staphylococcus</taxon>
    </lineage>
</organism>
<accession>P63894</accession>
<accession>Q99U88</accession>
<sequence>MKILLIGYGAMNQRVARLAEEKGHEIVGVIENTPKATTPYQQYQHIADVKDADVAIDFSNPNLLFPLLDEEFHLPLVVATTGEKEKLLNKLDELSQNMPVFFSANMSYGVHALTKILAAAVPLLDDFDIELTEAHHNKKVDAPSGTLEKLYDVIVSLKENVTPVYDRHELNEKRQPQDIGIHSIRGGTIVGEHEVLFAGTDETIQITHRAQSKDIFANGAIQAAERLVNKPNGFYTFDNL</sequence>
<evidence type="ECO:0000255" key="1">
    <source>
        <dbReference type="HAMAP-Rule" id="MF_00102"/>
    </source>
</evidence>
<evidence type="ECO:0000305" key="2"/>
<proteinExistence type="inferred from homology"/>